<sequence length="255" mass="28636">MKVKVFNLEGEPVEEIELPKVFSTPFRPDLIRRAVIASWTHRIQPQGRDPLAGKRRVTENIGKGHGMARVERIKTPPRFAAFVPFARGGRRTHPPKVEKIIWEDINKKERRLAIMSAIAATANPDLVRARGHVVDNVPAFPLVVVDDLQKVFKTAQTREIFKKLGIWDDIERAKRNTKIRAGKGKMRGRRYKKAKGPLIVVAKNEGIVQGARNHPGVDVVTVDNLGVELLAPGTHPGRLTIWTKGAIERLKEIYG</sequence>
<gene>
    <name evidence="1" type="primary">rpl4</name>
    <name type="ordered locus">TGAM_2002</name>
</gene>
<proteinExistence type="inferred from homology"/>
<protein>
    <recommendedName>
        <fullName evidence="1">Large ribosomal subunit protein uL4</fullName>
    </recommendedName>
    <alternativeName>
        <fullName evidence="2">50S ribosomal protein L4</fullName>
    </alternativeName>
</protein>
<evidence type="ECO:0000255" key="1">
    <source>
        <dbReference type="HAMAP-Rule" id="MF_01328"/>
    </source>
</evidence>
<evidence type="ECO:0000305" key="2"/>
<comment type="function">
    <text evidence="1">One of the primary rRNA binding proteins, this protein initially binds near the 5'-end of the 23S rRNA. It is important during the early stages of 50S assembly. It makes multiple contacts with different domains of the 23S rRNA in the assembled 50S subunit and ribosome.</text>
</comment>
<comment type="function">
    <text evidence="1">Forms part of the polypeptide exit tunnel.</text>
</comment>
<comment type="subunit">
    <text evidence="1">Part of the 50S ribosomal subunit.</text>
</comment>
<comment type="similarity">
    <text evidence="1">Belongs to the universal ribosomal protein uL4 family.</text>
</comment>
<accession>C5A285</accession>
<keyword id="KW-1185">Reference proteome</keyword>
<keyword id="KW-0687">Ribonucleoprotein</keyword>
<keyword id="KW-0689">Ribosomal protein</keyword>
<keyword id="KW-0694">RNA-binding</keyword>
<keyword id="KW-0699">rRNA-binding</keyword>
<reference key="1">
    <citation type="journal article" date="2007" name="Genome Biol.">
        <title>Genome analysis and genome-wide proteomics of Thermococcus gammatolerans, the most radioresistant organism known amongst the Archaea.</title>
        <authorList>
            <person name="Zivanovic Y."/>
            <person name="Armengaud J."/>
            <person name="Lagorce A."/>
            <person name="Leplat C."/>
            <person name="Guerin P."/>
            <person name="Dutertre M."/>
            <person name="Anthouard V."/>
            <person name="Forterre P."/>
            <person name="Wincker P."/>
            <person name="Confalonieri F."/>
        </authorList>
    </citation>
    <scope>NUCLEOTIDE SEQUENCE [LARGE SCALE GENOMIC DNA]</scope>
    <source>
        <strain>DSM 15229 / JCM 11827 / EJ3</strain>
    </source>
</reference>
<feature type="chain" id="PRO_1000214591" description="Large ribosomal subunit protein uL4">
    <location>
        <begin position="1"/>
        <end position="255"/>
    </location>
</feature>
<dbReference type="EMBL" id="CP001398">
    <property type="protein sequence ID" value="ACS34504.1"/>
    <property type="molecule type" value="Genomic_DNA"/>
</dbReference>
<dbReference type="RefSeq" id="WP_015859607.1">
    <property type="nucleotide sequence ID" value="NC_012804.1"/>
</dbReference>
<dbReference type="SMR" id="C5A285"/>
<dbReference type="STRING" id="593117.TGAM_2002"/>
<dbReference type="PaxDb" id="593117-TGAM_2002"/>
<dbReference type="GeneID" id="7987059"/>
<dbReference type="KEGG" id="tga:TGAM_2002"/>
<dbReference type="PATRIC" id="fig|593117.10.peg.2012"/>
<dbReference type="eggNOG" id="arCOG04071">
    <property type="taxonomic scope" value="Archaea"/>
</dbReference>
<dbReference type="HOGENOM" id="CLU_026535_0_0_2"/>
<dbReference type="OrthoDB" id="10737at2157"/>
<dbReference type="Proteomes" id="UP000001488">
    <property type="component" value="Chromosome"/>
</dbReference>
<dbReference type="GO" id="GO:1990904">
    <property type="term" value="C:ribonucleoprotein complex"/>
    <property type="evidence" value="ECO:0007669"/>
    <property type="project" value="UniProtKB-KW"/>
</dbReference>
<dbReference type="GO" id="GO:0005840">
    <property type="term" value="C:ribosome"/>
    <property type="evidence" value="ECO:0007669"/>
    <property type="project" value="UniProtKB-KW"/>
</dbReference>
<dbReference type="GO" id="GO:0019843">
    <property type="term" value="F:rRNA binding"/>
    <property type="evidence" value="ECO:0007669"/>
    <property type="project" value="UniProtKB-UniRule"/>
</dbReference>
<dbReference type="GO" id="GO:0003735">
    <property type="term" value="F:structural constituent of ribosome"/>
    <property type="evidence" value="ECO:0007669"/>
    <property type="project" value="InterPro"/>
</dbReference>
<dbReference type="GO" id="GO:0006412">
    <property type="term" value="P:translation"/>
    <property type="evidence" value="ECO:0007669"/>
    <property type="project" value="UniProtKB-UniRule"/>
</dbReference>
<dbReference type="FunFam" id="3.40.1370.10:FF:000011">
    <property type="entry name" value="50S ribosomal protein L4"/>
    <property type="match status" value="1"/>
</dbReference>
<dbReference type="Gene3D" id="3.40.1370.10">
    <property type="match status" value="1"/>
</dbReference>
<dbReference type="HAMAP" id="MF_01328_A">
    <property type="entry name" value="Ribosomal_uL4_A"/>
    <property type="match status" value="1"/>
</dbReference>
<dbReference type="InterPro" id="IPR002136">
    <property type="entry name" value="Ribosomal_uL4"/>
</dbReference>
<dbReference type="InterPro" id="IPR023574">
    <property type="entry name" value="Ribosomal_uL4_dom_sf"/>
</dbReference>
<dbReference type="InterPro" id="IPR013000">
    <property type="entry name" value="Ribosomal_uL4_euk/arc_CS"/>
</dbReference>
<dbReference type="InterPro" id="IPR045240">
    <property type="entry name" value="Ribosomal_uL4_euk/arch"/>
</dbReference>
<dbReference type="InterPro" id="IPR019970">
    <property type="entry name" value="Ribosomall_uL4-arc"/>
</dbReference>
<dbReference type="NCBIfam" id="TIGR03672">
    <property type="entry name" value="rpl4p_arch"/>
    <property type="match status" value="1"/>
</dbReference>
<dbReference type="PANTHER" id="PTHR19431">
    <property type="entry name" value="60S RIBOSOMAL PROTEIN L4"/>
    <property type="match status" value="1"/>
</dbReference>
<dbReference type="Pfam" id="PF00573">
    <property type="entry name" value="Ribosomal_L4"/>
    <property type="match status" value="1"/>
</dbReference>
<dbReference type="SUPFAM" id="SSF52166">
    <property type="entry name" value="Ribosomal protein L4"/>
    <property type="match status" value="1"/>
</dbReference>
<dbReference type="PROSITE" id="PS00939">
    <property type="entry name" value="RIBOSOMAL_L1E"/>
    <property type="match status" value="1"/>
</dbReference>
<organism>
    <name type="scientific">Thermococcus gammatolerans (strain DSM 15229 / JCM 11827 / EJ3)</name>
    <dbReference type="NCBI Taxonomy" id="593117"/>
    <lineage>
        <taxon>Archaea</taxon>
        <taxon>Methanobacteriati</taxon>
        <taxon>Methanobacteriota</taxon>
        <taxon>Thermococci</taxon>
        <taxon>Thermococcales</taxon>
        <taxon>Thermococcaceae</taxon>
        <taxon>Thermococcus</taxon>
    </lineage>
</organism>
<name>RL4_THEGJ</name>